<feature type="chain" id="PRO_0000237516" description="DNA-directed RNA polymerase subunit omega">
    <location>
        <begin position="1"/>
        <end position="75"/>
    </location>
</feature>
<reference key="1">
    <citation type="submission" date="2005-07" db="EMBL/GenBank/DDBJ databases">
        <title>Complete sequence of Synechococcus sp. CC9605.</title>
        <authorList>
            <consortium name="US DOE Joint Genome Institute"/>
            <person name="Copeland A."/>
            <person name="Lucas S."/>
            <person name="Lapidus A."/>
            <person name="Barry K."/>
            <person name="Detter J.C."/>
            <person name="Glavina T."/>
            <person name="Hammon N."/>
            <person name="Israni S."/>
            <person name="Pitluck S."/>
            <person name="Schmutz J."/>
            <person name="Martinez M."/>
            <person name="Larimer F."/>
            <person name="Land M."/>
            <person name="Kyrpides N."/>
            <person name="Ivanova N."/>
            <person name="Richardson P."/>
        </authorList>
    </citation>
    <scope>NUCLEOTIDE SEQUENCE [LARGE SCALE GENOMIC DNA]</scope>
    <source>
        <strain>CC9605</strain>
    </source>
</reference>
<comment type="function">
    <text evidence="1">Promotes RNA polymerase assembly. Latches the N- and C-terminal regions of the beta' subunit thereby facilitating its interaction with the beta and alpha subunits.</text>
</comment>
<comment type="catalytic activity">
    <reaction evidence="1">
        <text>RNA(n) + a ribonucleoside 5'-triphosphate = RNA(n+1) + diphosphate</text>
        <dbReference type="Rhea" id="RHEA:21248"/>
        <dbReference type="Rhea" id="RHEA-COMP:14527"/>
        <dbReference type="Rhea" id="RHEA-COMP:17342"/>
        <dbReference type="ChEBI" id="CHEBI:33019"/>
        <dbReference type="ChEBI" id="CHEBI:61557"/>
        <dbReference type="ChEBI" id="CHEBI:140395"/>
        <dbReference type="EC" id="2.7.7.6"/>
    </reaction>
</comment>
<comment type="subunit">
    <text evidence="1">In cyanobacteria the RNAP catalytic core is composed of 2 alpha, 1 beta, 1 beta', 1 gamma and 1 omega subunit. When a sigma factor is associated with the core the holoenzyme is formed, which can initiate transcription.</text>
</comment>
<comment type="similarity">
    <text evidence="1">Belongs to the RNA polymerase subunit omega family.</text>
</comment>
<protein>
    <recommendedName>
        <fullName evidence="1">DNA-directed RNA polymerase subunit omega</fullName>
        <shortName evidence="1">RNAP omega subunit</shortName>
        <ecNumber evidence="1">2.7.7.6</ecNumber>
    </recommendedName>
    <alternativeName>
        <fullName evidence="1">RNA polymerase omega subunit</fullName>
    </alternativeName>
    <alternativeName>
        <fullName evidence="1">Transcriptase subunit omega</fullName>
    </alternativeName>
</protein>
<name>RPOZ_SYNSC</name>
<evidence type="ECO:0000255" key="1">
    <source>
        <dbReference type="HAMAP-Rule" id="MF_00366"/>
    </source>
</evidence>
<gene>
    <name evidence="1" type="primary">rpoZ</name>
    <name type="ordered locus">Syncc9605_2158</name>
</gene>
<keyword id="KW-0240">DNA-directed RNA polymerase</keyword>
<keyword id="KW-0548">Nucleotidyltransferase</keyword>
<keyword id="KW-0804">Transcription</keyword>
<keyword id="KW-0808">Transferase</keyword>
<dbReference type="EC" id="2.7.7.6" evidence="1"/>
<dbReference type="EMBL" id="CP000110">
    <property type="protein sequence ID" value="ABB35897.1"/>
    <property type="molecule type" value="Genomic_DNA"/>
</dbReference>
<dbReference type="RefSeq" id="WP_011365102.1">
    <property type="nucleotide sequence ID" value="NC_007516.1"/>
</dbReference>
<dbReference type="SMR" id="Q3AHN5"/>
<dbReference type="STRING" id="110662.Syncc9605_2158"/>
<dbReference type="KEGG" id="syd:Syncc9605_2158"/>
<dbReference type="eggNOG" id="ENOG5032RMS">
    <property type="taxonomic scope" value="Bacteria"/>
</dbReference>
<dbReference type="HOGENOM" id="CLU_175526_0_0_3"/>
<dbReference type="OrthoDB" id="463386at2"/>
<dbReference type="GO" id="GO:0000428">
    <property type="term" value="C:DNA-directed RNA polymerase complex"/>
    <property type="evidence" value="ECO:0007669"/>
    <property type="project" value="UniProtKB-KW"/>
</dbReference>
<dbReference type="GO" id="GO:0003677">
    <property type="term" value="F:DNA binding"/>
    <property type="evidence" value="ECO:0007669"/>
    <property type="project" value="UniProtKB-UniRule"/>
</dbReference>
<dbReference type="GO" id="GO:0003899">
    <property type="term" value="F:DNA-directed RNA polymerase activity"/>
    <property type="evidence" value="ECO:0007669"/>
    <property type="project" value="UniProtKB-UniRule"/>
</dbReference>
<dbReference type="GO" id="GO:0006351">
    <property type="term" value="P:DNA-templated transcription"/>
    <property type="evidence" value="ECO:0007669"/>
    <property type="project" value="UniProtKB-UniRule"/>
</dbReference>
<dbReference type="HAMAP" id="MF_00366">
    <property type="entry name" value="RNApol_bact_RpoZ"/>
    <property type="match status" value="1"/>
</dbReference>
<dbReference type="InterPro" id="IPR003716">
    <property type="entry name" value="DNA-dir_RNA_pol_omega"/>
</dbReference>
<dbReference type="InterPro" id="IPR006110">
    <property type="entry name" value="Pol_omega/Rpo6/RPB6"/>
</dbReference>
<dbReference type="NCBIfam" id="NF001574">
    <property type="entry name" value="PRK00392.2-5"/>
    <property type="match status" value="1"/>
</dbReference>
<dbReference type="Pfam" id="PF01192">
    <property type="entry name" value="RNA_pol_Rpb6"/>
    <property type="match status" value="1"/>
</dbReference>
<organism>
    <name type="scientific">Synechococcus sp. (strain CC9605)</name>
    <dbReference type="NCBI Taxonomy" id="110662"/>
    <lineage>
        <taxon>Bacteria</taxon>
        <taxon>Bacillati</taxon>
        <taxon>Cyanobacteriota</taxon>
        <taxon>Cyanophyceae</taxon>
        <taxon>Synechococcales</taxon>
        <taxon>Synechococcaceae</taxon>
        <taxon>Synechococcus</taxon>
    </lineage>
</organism>
<accession>Q3AHN5</accession>
<proteinExistence type="inferred from homology"/>
<sequence length="75" mass="8481">MLSAGVDSKDLSKRGESLIRQSSNRYLTTVRIAFRAKQRRFDDFDGLLEESSVKPVQRAIVELSDEQDQPDLLPG</sequence>